<name>MIAA_CAMLR</name>
<feature type="chain" id="PRO_0000377108" description="tRNA dimethylallyltransferase">
    <location>
        <begin position="1"/>
        <end position="291"/>
    </location>
</feature>
<feature type="region of interest" description="Interaction with substrate tRNA" evidence="1">
    <location>
        <begin position="34"/>
        <end position="37"/>
    </location>
</feature>
<feature type="binding site" evidence="1">
    <location>
        <begin position="9"/>
        <end position="16"/>
    </location>
    <ligand>
        <name>ATP</name>
        <dbReference type="ChEBI" id="CHEBI:30616"/>
    </ligand>
</feature>
<feature type="binding site" evidence="1">
    <location>
        <begin position="11"/>
        <end position="16"/>
    </location>
    <ligand>
        <name>substrate</name>
    </ligand>
</feature>
<feature type="site" description="Interaction with substrate tRNA" evidence="1">
    <location>
        <position position="100"/>
    </location>
</feature>
<protein>
    <recommendedName>
        <fullName evidence="1">tRNA dimethylallyltransferase</fullName>
        <ecNumber evidence="1">2.5.1.75</ecNumber>
    </recommendedName>
    <alternativeName>
        <fullName evidence="1">Dimethylallyl diphosphate:tRNA dimethylallyltransferase</fullName>
        <shortName evidence="1">DMAPP:tRNA dimethylallyltransferase</shortName>
        <shortName evidence="1">DMATase</shortName>
    </alternativeName>
    <alternativeName>
        <fullName evidence="1">Isopentenyl-diphosphate:tRNA isopentenyltransferase</fullName>
        <shortName evidence="1">IPP transferase</shortName>
        <shortName evidence="1">IPPT</shortName>
        <shortName evidence="1">IPTase</shortName>
    </alternativeName>
</protein>
<sequence length="291" mass="34025">MFFEFALIGTTASGKTELANKLAYEFNASILSLDSLCVYKQINIASAKTEQKTLDELDYFGINLLNVNEHFNIALFFEEYKKAKTFAQKNNQILIITGGTSFYLKALMDGLSENFKESQSTLSNDEIYHLMIKIDPQAKIEKNDTYRLKKWLGIYEQTNKIPSEVLKETKQEALIKKLDIFEISWQKDLLEKRIIKRTKNMLNEGLIEEAKMLFDNYDHHLKALNSIGLKECKDFLDKKINLNKLEELIIIHTRQLAKRQRTFNKKFNKENLDFQSAYENLKAYILKKYQG</sequence>
<evidence type="ECO:0000255" key="1">
    <source>
        <dbReference type="HAMAP-Rule" id="MF_00185"/>
    </source>
</evidence>
<proteinExistence type="inferred from homology"/>
<keyword id="KW-0067">ATP-binding</keyword>
<keyword id="KW-0460">Magnesium</keyword>
<keyword id="KW-0547">Nucleotide-binding</keyword>
<keyword id="KW-1185">Reference proteome</keyword>
<keyword id="KW-0808">Transferase</keyword>
<keyword id="KW-0819">tRNA processing</keyword>
<accession>B9KDV7</accession>
<organism>
    <name type="scientific">Campylobacter lari (strain RM2100 / D67 / ATCC BAA-1060)</name>
    <dbReference type="NCBI Taxonomy" id="306263"/>
    <lineage>
        <taxon>Bacteria</taxon>
        <taxon>Pseudomonadati</taxon>
        <taxon>Campylobacterota</taxon>
        <taxon>Epsilonproteobacteria</taxon>
        <taxon>Campylobacterales</taxon>
        <taxon>Campylobacteraceae</taxon>
        <taxon>Campylobacter</taxon>
    </lineage>
</organism>
<gene>
    <name evidence="1" type="primary">miaA</name>
    <name type="ordered locus">Cla_1430</name>
</gene>
<comment type="function">
    <text evidence="1">Catalyzes the transfer of a dimethylallyl group onto the adenine at position 37 in tRNAs that read codons beginning with uridine, leading to the formation of N6-(dimethylallyl)adenosine (i(6)A).</text>
</comment>
<comment type="catalytic activity">
    <reaction evidence="1">
        <text>adenosine(37) in tRNA + dimethylallyl diphosphate = N(6)-dimethylallyladenosine(37) in tRNA + diphosphate</text>
        <dbReference type="Rhea" id="RHEA:26482"/>
        <dbReference type="Rhea" id="RHEA-COMP:10162"/>
        <dbReference type="Rhea" id="RHEA-COMP:10375"/>
        <dbReference type="ChEBI" id="CHEBI:33019"/>
        <dbReference type="ChEBI" id="CHEBI:57623"/>
        <dbReference type="ChEBI" id="CHEBI:74411"/>
        <dbReference type="ChEBI" id="CHEBI:74415"/>
        <dbReference type="EC" id="2.5.1.75"/>
    </reaction>
</comment>
<comment type="cofactor">
    <cofactor evidence="1">
        <name>Mg(2+)</name>
        <dbReference type="ChEBI" id="CHEBI:18420"/>
    </cofactor>
</comment>
<comment type="subunit">
    <text evidence="1">Monomer.</text>
</comment>
<comment type="similarity">
    <text evidence="1">Belongs to the IPP transferase family.</text>
</comment>
<reference key="1">
    <citation type="journal article" date="2008" name="Foodborne Pathog. Dis.">
        <title>The complete genome sequence and analysis of the human pathogen Campylobacter lari.</title>
        <authorList>
            <person name="Miller W.G."/>
            <person name="Wang G."/>
            <person name="Binnewies T.T."/>
            <person name="Parker C.T."/>
        </authorList>
    </citation>
    <scope>NUCLEOTIDE SEQUENCE [LARGE SCALE GENOMIC DNA]</scope>
    <source>
        <strain>RM2100 / D67 / ATCC BAA-1060</strain>
    </source>
</reference>
<dbReference type="EC" id="2.5.1.75" evidence="1"/>
<dbReference type="EMBL" id="CP000932">
    <property type="protein sequence ID" value="ACM64745.1"/>
    <property type="molecule type" value="Genomic_DNA"/>
</dbReference>
<dbReference type="RefSeq" id="WP_012662128.1">
    <property type="nucleotide sequence ID" value="NC_012039.1"/>
</dbReference>
<dbReference type="RefSeq" id="WP_012662129.1">
    <property type="nucleotide sequence ID" value="NC_012039.1"/>
</dbReference>
<dbReference type="SMR" id="B9KDV7"/>
<dbReference type="STRING" id="306263.Cla_1430"/>
<dbReference type="KEGG" id="cla:CLA_1430"/>
<dbReference type="PATRIC" id="fig|306263.5.peg.1416"/>
<dbReference type="eggNOG" id="COG0324">
    <property type="taxonomic scope" value="Bacteria"/>
</dbReference>
<dbReference type="HOGENOM" id="CLU_032616_0_1_7"/>
<dbReference type="Proteomes" id="UP000007727">
    <property type="component" value="Chromosome"/>
</dbReference>
<dbReference type="GO" id="GO:0005524">
    <property type="term" value="F:ATP binding"/>
    <property type="evidence" value="ECO:0007669"/>
    <property type="project" value="UniProtKB-UniRule"/>
</dbReference>
<dbReference type="GO" id="GO:0052381">
    <property type="term" value="F:tRNA dimethylallyltransferase activity"/>
    <property type="evidence" value="ECO:0007669"/>
    <property type="project" value="UniProtKB-UniRule"/>
</dbReference>
<dbReference type="GO" id="GO:0006400">
    <property type="term" value="P:tRNA modification"/>
    <property type="evidence" value="ECO:0007669"/>
    <property type="project" value="TreeGrafter"/>
</dbReference>
<dbReference type="Gene3D" id="1.10.20.140">
    <property type="match status" value="1"/>
</dbReference>
<dbReference type="Gene3D" id="3.40.50.300">
    <property type="entry name" value="P-loop containing nucleotide triphosphate hydrolases"/>
    <property type="match status" value="1"/>
</dbReference>
<dbReference type="HAMAP" id="MF_00185">
    <property type="entry name" value="IPP_trans"/>
    <property type="match status" value="1"/>
</dbReference>
<dbReference type="InterPro" id="IPR039657">
    <property type="entry name" value="Dimethylallyltransferase"/>
</dbReference>
<dbReference type="InterPro" id="IPR018022">
    <property type="entry name" value="IPT"/>
</dbReference>
<dbReference type="InterPro" id="IPR027417">
    <property type="entry name" value="P-loop_NTPase"/>
</dbReference>
<dbReference type="NCBIfam" id="TIGR00174">
    <property type="entry name" value="miaA"/>
    <property type="match status" value="1"/>
</dbReference>
<dbReference type="PANTHER" id="PTHR11088">
    <property type="entry name" value="TRNA DIMETHYLALLYLTRANSFERASE"/>
    <property type="match status" value="1"/>
</dbReference>
<dbReference type="PANTHER" id="PTHR11088:SF60">
    <property type="entry name" value="TRNA DIMETHYLALLYLTRANSFERASE"/>
    <property type="match status" value="1"/>
</dbReference>
<dbReference type="Pfam" id="PF01715">
    <property type="entry name" value="IPPT"/>
    <property type="match status" value="1"/>
</dbReference>
<dbReference type="SUPFAM" id="SSF52540">
    <property type="entry name" value="P-loop containing nucleoside triphosphate hydrolases"/>
    <property type="match status" value="2"/>
</dbReference>